<protein>
    <recommendedName>
        <fullName evidence="1">Large ribosomal subunit protein bL33</fullName>
    </recommendedName>
    <alternativeName>
        <fullName>50S ribosomal protein L33</fullName>
    </alternativeName>
</protein>
<dbReference type="EMBL" id="Z11839">
    <property type="protein sequence ID" value="CAA77864.1"/>
    <property type="molecule type" value="Genomic_DNA"/>
</dbReference>
<dbReference type="EMBL" id="AE000512">
    <property type="protein sequence ID" value="AAD35534.1"/>
    <property type="molecule type" value="Genomic_DNA"/>
</dbReference>
<dbReference type="PIR" id="D72375">
    <property type="entry name" value="D72375"/>
</dbReference>
<dbReference type="RefSeq" id="NP_228261.1">
    <property type="nucleotide sequence ID" value="NC_000853.1"/>
</dbReference>
<dbReference type="RefSeq" id="WP_004081515.1">
    <property type="nucleotide sequence ID" value="NZ_CP011107.1"/>
</dbReference>
<dbReference type="SMR" id="P35873"/>
<dbReference type="FunCoup" id="P35873">
    <property type="interactions" value="61"/>
</dbReference>
<dbReference type="STRING" id="243274.TM_0451"/>
<dbReference type="PaxDb" id="243274-THEMA_02440"/>
<dbReference type="EnsemblBacteria" id="AAD35534">
    <property type="protein sequence ID" value="AAD35534"/>
    <property type="gene ID" value="TM_0451"/>
</dbReference>
<dbReference type="KEGG" id="tma:TM0451"/>
<dbReference type="KEGG" id="tmi:THEMA_02440"/>
<dbReference type="KEGG" id="tmm:Tmari_0448"/>
<dbReference type="KEGG" id="tmw:THMA_0460"/>
<dbReference type="eggNOG" id="COG0267">
    <property type="taxonomic scope" value="Bacteria"/>
</dbReference>
<dbReference type="InParanoid" id="P35873"/>
<dbReference type="OrthoDB" id="9801333at2"/>
<dbReference type="Proteomes" id="UP000008183">
    <property type="component" value="Chromosome"/>
</dbReference>
<dbReference type="GO" id="GO:0005737">
    <property type="term" value="C:cytoplasm"/>
    <property type="evidence" value="ECO:0007669"/>
    <property type="project" value="UniProtKB-ARBA"/>
</dbReference>
<dbReference type="GO" id="GO:1990904">
    <property type="term" value="C:ribonucleoprotein complex"/>
    <property type="evidence" value="ECO:0007669"/>
    <property type="project" value="UniProtKB-KW"/>
</dbReference>
<dbReference type="GO" id="GO:0005840">
    <property type="term" value="C:ribosome"/>
    <property type="evidence" value="ECO:0007669"/>
    <property type="project" value="UniProtKB-KW"/>
</dbReference>
<dbReference type="GO" id="GO:0003735">
    <property type="term" value="F:structural constituent of ribosome"/>
    <property type="evidence" value="ECO:0007669"/>
    <property type="project" value="InterPro"/>
</dbReference>
<dbReference type="GO" id="GO:0006412">
    <property type="term" value="P:translation"/>
    <property type="evidence" value="ECO:0007669"/>
    <property type="project" value="UniProtKB-UniRule"/>
</dbReference>
<dbReference type="Gene3D" id="2.20.28.120">
    <property type="entry name" value="Ribosomal protein L33"/>
    <property type="match status" value="1"/>
</dbReference>
<dbReference type="HAMAP" id="MF_00294">
    <property type="entry name" value="Ribosomal_bL33"/>
    <property type="match status" value="1"/>
</dbReference>
<dbReference type="InterPro" id="IPR001705">
    <property type="entry name" value="Ribosomal_bL33"/>
</dbReference>
<dbReference type="InterPro" id="IPR018264">
    <property type="entry name" value="Ribosomal_bL33_CS"/>
</dbReference>
<dbReference type="InterPro" id="IPR038584">
    <property type="entry name" value="Ribosomal_bL33_sf"/>
</dbReference>
<dbReference type="InterPro" id="IPR011332">
    <property type="entry name" value="Ribosomal_zn-bd"/>
</dbReference>
<dbReference type="NCBIfam" id="NF001764">
    <property type="entry name" value="PRK00504.1"/>
    <property type="match status" value="1"/>
</dbReference>
<dbReference type="NCBIfam" id="NF001860">
    <property type="entry name" value="PRK00595.1"/>
    <property type="match status" value="1"/>
</dbReference>
<dbReference type="NCBIfam" id="TIGR01023">
    <property type="entry name" value="rpmG_bact"/>
    <property type="match status" value="1"/>
</dbReference>
<dbReference type="PANTHER" id="PTHR43168">
    <property type="entry name" value="50S RIBOSOMAL PROTEIN L33, CHLOROPLASTIC"/>
    <property type="match status" value="1"/>
</dbReference>
<dbReference type="PANTHER" id="PTHR43168:SF6">
    <property type="entry name" value="LARGE RIBOSOMAL SUBUNIT PROTEIN BL33A"/>
    <property type="match status" value="1"/>
</dbReference>
<dbReference type="Pfam" id="PF00471">
    <property type="entry name" value="Ribosomal_L33"/>
    <property type="match status" value="1"/>
</dbReference>
<dbReference type="SUPFAM" id="SSF57829">
    <property type="entry name" value="Zn-binding ribosomal proteins"/>
    <property type="match status" value="1"/>
</dbReference>
<dbReference type="PROSITE" id="PS00582">
    <property type="entry name" value="RIBOSOMAL_L33"/>
    <property type="match status" value="1"/>
</dbReference>
<gene>
    <name type="primary">rpmG</name>
    <name type="ordered locus">TM_0451</name>
</gene>
<keyword id="KW-1185">Reference proteome</keyword>
<keyword id="KW-0687">Ribonucleoprotein</keyword>
<keyword id="KW-0689">Ribosomal protein</keyword>
<proteinExistence type="inferred from homology"/>
<evidence type="ECO:0000305" key="1"/>
<feature type="chain" id="PRO_0000170256" description="Large ribosomal subunit protein bL33">
    <location>
        <begin position="1"/>
        <end position="49"/>
    </location>
</feature>
<accession>P35873</accession>
<comment type="similarity">
    <text evidence="1">Belongs to the bacterial ribosomal protein bL33 family.</text>
</comment>
<reference key="1">
    <citation type="journal article" date="1992" name="J. Biol. Chem.">
        <title>The organization and expression of essential transcription translation component genes in the extremely thermophilic eubacterium Thermotoga maritima.</title>
        <authorList>
            <person name="Liao D."/>
            <person name="Dennis P.P."/>
        </authorList>
    </citation>
    <scope>NUCLEOTIDE SEQUENCE [GENOMIC DNA]</scope>
    <source>
        <strain>ATCC 43589 / DSM 3109 / JCM 10099 / NBRC 100826 / MSB8</strain>
    </source>
</reference>
<reference key="2">
    <citation type="journal article" date="1999" name="Nature">
        <title>Evidence for lateral gene transfer between Archaea and Bacteria from genome sequence of Thermotoga maritima.</title>
        <authorList>
            <person name="Nelson K.E."/>
            <person name="Clayton R.A."/>
            <person name="Gill S.R."/>
            <person name="Gwinn M.L."/>
            <person name="Dodson R.J."/>
            <person name="Haft D.H."/>
            <person name="Hickey E.K."/>
            <person name="Peterson J.D."/>
            <person name="Nelson W.C."/>
            <person name="Ketchum K.A."/>
            <person name="McDonald L.A."/>
            <person name="Utterback T.R."/>
            <person name="Malek J.A."/>
            <person name="Linher K.D."/>
            <person name="Garrett M.M."/>
            <person name="Stewart A.M."/>
            <person name="Cotton M.D."/>
            <person name="Pratt M.S."/>
            <person name="Phillips C.A."/>
            <person name="Richardson D.L."/>
            <person name="Heidelberg J.F."/>
            <person name="Sutton G.G."/>
            <person name="Fleischmann R.D."/>
            <person name="Eisen J.A."/>
            <person name="White O."/>
            <person name="Salzberg S.L."/>
            <person name="Smith H.O."/>
            <person name="Venter J.C."/>
            <person name="Fraser C.M."/>
        </authorList>
    </citation>
    <scope>NUCLEOTIDE SEQUENCE [LARGE SCALE GENOMIC DNA]</scope>
    <source>
        <strain>ATCC 43589 / DSM 3109 / JCM 10099 / NBRC 100826 / MSB8</strain>
    </source>
</reference>
<reference key="3">
    <citation type="journal article" date="1994" name="Gene">
        <title>Identification of genes encoding ribosomal protein L33 from Bacillus licheniformis, Thermus thermophilus and Thermotoga maritima.</title>
        <authorList>
            <person name="Sharp P.M."/>
        </authorList>
    </citation>
    <scope>IDENTIFICATION</scope>
    <source>
        <strain>ATCC 43589 / DSM 3109 / JCM 10099 / NBRC 100826 / MSB8</strain>
    </source>
</reference>
<sequence>MRVKVALKCSQCGNKNYYTTRNKDKRAKLELRKYCPKCNAHTIHTETKA</sequence>
<name>RL33_THEMA</name>
<organism>
    <name type="scientific">Thermotoga maritima (strain ATCC 43589 / DSM 3109 / JCM 10099 / NBRC 100826 / MSB8)</name>
    <dbReference type="NCBI Taxonomy" id="243274"/>
    <lineage>
        <taxon>Bacteria</taxon>
        <taxon>Thermotogati</taxon>
        <taxon>Thermotogota</taxon>
        <taxon>Thermotogae</taxon>
        <taxon>Thermotogales</taxon>
        <taxon>Thermotogaceae</taxon>
        <taxon>Thermotoga</taxon>
    </lineage>
</organism>